<proteinExistence type="inferred from homology"/>
<accession>P44010</accession>
<reference key="1">
    <citation type="journal article" date="1995" name="Science">
        <title>Whole-genome random sequencing and assembly of Haemophilus influenzae Rd.</title>
        <authorList>
            <person name="Fleischmann R.D."/>
            <person name="Adams M.D."/>
            <person name="White O."/>
            <person name="Clayton R.A."/>
            <person name="Kirkness E.F."/>
            <person name="Kerlavage A.R."/>
            <person name="Bult C.J."/>
            <person name="Tomb J.-F."/>
            <person name="Dougherty B.A."/>
            <person name="Merrick J.M."/>
            <person name="McKenney K."/>
            <person name="Sutton G.G."/>
            <person name="FitzHugh W."/>
            <person name="Fields C.A."/>
            <person name="Gocayne J.D."/>
            <person name="Scott J.D."/>
            <person name="Shirley R."/>
            <person name="Liu L.-I."/>
            <person name="Glodek A."/>
            <person name="Kelley J.M."/>
            <person name="Weidman J.F."/>
            <person name="Phillips C.A."/>
            <person name="Spriggs T."/>
            <person name="Hedblom E."/>
            <person name="Cotton M.D."/>
            <person name="Utterback T.R."/>
            <person name="Hanna M.C."/>
            <person name="Nguyen D.T."/>
            <person name="Saudek D.M."/>
            <person name="Brandon R.C."/>
            <person name="Fine L.D."/>
            <person name="Fritchman J.L."/>
            <person name="Fuhrmann J.L."/>
            <person name="Geoghagen N.S.M."/>
            <person name="Gnehm C.L."/>
            <person name="McDonald L.A."/>
            <person name="Small K.V."/>
            <person name="Fraser C.M."/>
            <person name="Smith H.O."/>
            <person name="Venter J.C."/>
        </authorList>
    </citation>
    <scope>NUCLEOTIDE SEQUENCE [LARGE SCALE GENOMIC DNA]</scope>
    <source>
        <strain>ATCC 51907 / DSM 11121 / KW20 / Rd</strain>
    </source>
</reference>
<sequence length="183" mass="20814">MKENKPVDPYAKYNEQSNIIAKIIFASRWLQVPIYLGLIVTLAIYSYKFIKGLWELVINVNDMDSNTIMLGVLNLIDVVMIANLLVMVTIGGYEIFVSKLRTRNHPDQPEWMSHVNATVLKVKLSMSIIGISSIHMLQTFVNASNMPEKTMMWQLLLHLGFLVSAIALAYTDKILYSTSHKTH</sequence>
<feature type="chain" id="PRO_0000214370" description="UPF0114 protein HI_0507">
    <location>
        <begin position="1"/>
        <end position="183"/>
    </location>
</feature>
<feature type="transmembrane region" description="Helical" evidence="1">
    <location>
        <begin position="30"/>
        <end position="50"/>
    </location>
</feature>
<feature type="transmembrane region" description="Helical" evidence="1">
    <location>
        <begin position="68"/>
        <end position="88"/>
    </location>
</feature>
<feature type="transmembrane region" description="Helical" evidence="1">
    <location>
        <begin position="150"/>
        <end position="170"/>
    </location>
</feature>
<keyword id="KW-1003">Cell membrane</keyword>
<keyword id="KW-0472">Membrane</keyword>
<keyword id="KW-1185">Reference proteome</keyword>
<keyword id="KW-0812">Transmembrane</keyword>
<keyword id="KW-1133">Transmembrane helix</keyword>
<name>Y507_HAEIN</name>
<comment type="subcellular location">
    <subcellularLocation>
        <location evidence="2">Cell membrane</location>
        <topology evidence="2">Multi-pass membrane protein</topology>
    </subcellularLocation>
</comment>
<comment type="similarity">
    <text evidence="2">Belongs to the UPF0114 family.</text>
</comment>
<organism>
    <name type="scientific">Haemophilus influenzae (strain ATCC 51907 / DSM 11121 / KW20 / Rd)</name>
    <dbReference type="NCBI Taxonomy" id="71421"/>
    <lineage>
        <taxon>Bacteria</taxon>
        <taxon>Pseudomonadati</taxon>
        <taxon>Pseudomonadota</taxon>
        <taxon>Gammaproteobacteria</taxon>
        <taxon>Pasteurellales</taxon>
        <taxon>Pasteurellaceae</taxon>
        <taxon>Haemophilus</taxon>
    </lineage>
</organism>
<dbReference type="EMBL" id="L42023">
    <property type="protein sequence ID" value="AAC22165.1"/>
    <property type="molecule type" value="Genomic_DNA"/>
</dbReference>
<dbReference type="PIR" id="A64009">
    <property type="entry name" value="A64009"/>
</dbReference>
<dbReference type="RefSeq" id="NP_438665.1">
    <property type="nucleotide sequence ID" value="NC_000907.1"/>
</dbReference>
<dbReference type="STRING" id="71421.HI_0507"/>
<dbReference type="EnsemblBacteria" id="AAC22165">
    <property type="protein sequence ID" value="AAC22165"/>
    <property type="gene ID" value="HI_0507"/>
</dbReference>
<dbReference type="KEGG" id="hin:HI_0507"/>
<dbReference type="PATRIC" id="fig|71421.8.peg.526"/>
<dbReference type="eggNOG" id="COG2862">
    <property type="taxonomic scope" value="Bacteria"/>
</dbReference>
<dbReference type="HOGENOM" id="CLU_097887_0_0_6"/>
<dbReference type="OrthoDB" id="9783569at2"/>
<dbReference type="PhylomeDB" id="P44010"/>
<dbReference type="BioCyc" id="HINF71421:G1GJ1-520-MONOMER"/>
<dbReference type="Proteomes" id="UP000000579">
    <property type="component" value="Chromosome"/>
</dbReference>
<dbReference type="GO" id="GO:0005886">
    <property type="term" value="C:plasma membrane"/>
    <property type="evidence" value="ECO:0000318"/>
    <property type="project" value="GO_Central"/>
</dbReference>
<dbReference type="HAMAP" id="MF_00143">
    <property type="entry name" value="UPF0114"/>
    <property type="match status" value="1"/>
</dbReference>
<dbReference type="InterPro" id="IPR005134">
    <property type="entry name" value="UPF0114"/>
</dbReference>
<dbReference type="InterPro" id="IPR020761">
    <property type="entry name" value="UPF0114_bac"/>
</dbReference>
<dbReference type="NCBIfam" id="TIGR00645">
    <property type="entry name" value="HI0507"/>
    <property type="match status" value="1"/>
</dbReference>
<dbReference type="PANTHER" id="PTHR38596">
    <property type="entry name" value="UPF0114 PROTEIN YQHA"/>
    <property type="match status" value="1"/>
</dbReference>
<dbReference type="PANTHER" id="PTHR38596:SF1">
    <property type="entry name" value="UPF0114 PROTEIN YQHA"/>
    <property type="match status" value="1"/>
</dbReference>
<dbReference type="Pfam" id="PF03350">
    <property type="entry name" value="UPF0114"/>
    <property type="match status" value="1"/>
</dbReference>
<protein>
    <recommendedName>
        <fullName>UPF0114 protein HI_0507</fullName>
    </recommendedName>
</protein>
<evidence type="ECO:0000255" key="1"/>
<evidence type="ECO:0000305" key="2"/>
<gene>
    <name type="ordered locus">HI_0507</name>
</gene>